<organism>
    <name type="scientific">Corynebacterium urealyticum (strain ATCC 43042 / DSM 7109)</name>
    <dbReference type="NCBI Taxonomy" id="504474"/>
    <lineage>
        <taxon>Bacteria</taxon>
        <taxon>Bacillati</taxon>
        <taxon>Actinomycetota</taxon>
        <taxon>Actinomycetes</taxon>
        <taxon>Mycobacteriales</taxon>
        <taxon>Corynebacteriaceae</taxon>
        <taxon>Corynebacterium</taxon>
    </lineage>
</organism>
<dbReference type="EMBL" id="AM942444">
    <property type="protein sequence ID" value="CAQ05328.1"/>
    <property type="molecule type" value="Genomic_DNA"/>
</dbReference>
<dbReference type="RefSeq" id="WP_012360616.1">
    <property type="nucleotide sequence ID" value="NC_010545.1"/>
</dbReference>
<dbReference type="SMR" id="B1VGM1"/>
<dbReference type="STRING" id="504474.cu1368"/>
<dbReference type="GeneID" id="60604148"/>
<dbReference type="KEGG" id="cur:cu1368"/>
<dbReference type="eggNOG" id="COG0261">
    <property type="taxonomic scope" value="Bacteria"/>
</dbReference>
<dbReference type="HOGENOM" id="CLU_061463_3_2_11"/>
<dbReference type="Proteomes" id="UP000001727">
    <property type="component" value="Chromosome"/>
</dbReference>
<dbReference type="GO" id="GO:0005737">
    <property type="term" value="C:cytoplasm"/>
    <property type="evidence" value="ECO:0007669"/>
    <property type="project" value="UniProtKB-ARBA"/>
</dbReference>
<dbReference type="GO" id="GO:1990904">
    <property type="term" value="C:ribonucleoprotein complex"/>
    <property type="evidence" value="ECO:0007669"/>
    <property type="project" value="UniProtKB-KW"/>
</dbReference>
<dbReference type="GO" id="GO:0005840">
    <property type="term" value="C:ribosome"/>
    <property type="evidence" value="ECO:0007669"/>
    <property type="project" value="UniProtKB-KW"/>
</dbReference>
<dbReference type="GO" id="GO:0019843">
    <property type="term" value="F:rRNA binding"/>
    <property type="evidence" value="ECO:0007669"/>
    <property type="project" value="UniProtKB-UniRule"/>
</dbReference>
<dbReference type="GO" id="GO:0003735">
    <property type="term" value="F:structural constituent of ribosome"/>
    <property type="evidence" value="ECO:0007669"/>
    <property type="project" value="InterPro"/>
</dbReference>
<dbReference type="GO" id="GO:0006412">
    <property type="term" value="P:translation"/>
    <property type="evidence" value="ECO:0007669"/>
    <property type="project" value="UniProtKB-UniRule"/>
</dbReference>
<dbReference type="HAMAP" id="MF_01363">
    <property type="entry name" value="Ribosomal_bL21"/>
    <property type="match status" value="1"/>
</dbReference>
<dbReference type="InterPro" id="IPR028909">
    <property type="entry name" value="bL21-like"/>
</dbReference>
<dbReference type="InterPro" id="IPR036164">
    <property type="entry name" value="bL21-like_sf"/>
</dbReference>
<dbReference type="InterPro" id="IPR001787">
    <property type="entry name" value="Ribosomal_bL21"/>
</dbReference>
<dbReference type="NCBIfam" id="TIGR00061">
    <property type="entry name" value="L21"/>
    <property type="match status" value="1"/>
</dbReference>
<dbReference type="PANTHER" id="PTHR21349">
    <property type="entry name" value="50S RIBOSOMAL PROTEIN L21"/>
    <property type="match status" value="1"/>
</dbReference>
<dbReference type="PANTHER" id="PTHR21349:SF0">
    <property type="entry name" value="LARGE RIBOSOMAL SUBUNIT PROTEIN BL21M"/>
    <property type="match status" value="1"/>
</dbReference>
<dbReference type="Pfam" id="PF00829">
    <property type="entry name" value="Ribosomal_L21p"/>
    <property type="match status" value="1"/>
</dbReference>
<dbReference type="SUPFAM" id="SSF141091">
    <property type="entry name" value="L21p-like"/>
    <property type="match status" value="1"/>
</dbReference>
<evidence type="ECO:0000255" key="1">
    <source>
        <dbReference type="HAMAP-Rule" id="MF_01363"/>
    </source>
</evidence>
<evidence type="ECO:0000305" key="2"/>
<reference key="1">
    <citation type="journal article" date="2008" name="J. Biotechnol.">
        <title>The lifestyle of Corynebacterium urealyticum derived from its complete genome sequence established by pyrosequencing.</title>
        <authorList>
            <person name="Tauch A."/>
            <person name="Trost E."/>
            <person name="Tilker A."/>
            <person name="Ludewig U."/>
            <person name="Schneiker S."/>
            <person name="Goesmann A."/>
            <person name="Arnold W."/>
            <person name="Bekel T."/>
            <person name="Brinkrolf K."/>
            <person name="Brune I."/>
            <person name="Goetker S."/>
            <person name="Kalinowski J."/>
            <person name="Kamp P.-B."/>
            <person name="Lobo F.P."/>
            <person name="Viehoever P."/>
            <person name="Weisshaar B."/>
            <person name="Soriano F."/>
            <person name="Droege M."/>
            <person name="Puehler A."/>
        </authorList>
    </citation>
    <scope>NUCLEOTIDE SEQUENCE [LARGE SCALE GENOMIC DNA]</scope>
    <source>
        <strain>ATCC 43042 / DSM 7109</strain>
    </source>
</reference>
<sequence length="100" mass="10898">MYAIVKTGGKQYKVAEGDLVKVEKIEGEPGSAVALTPVLVVDGADLTSGDKLENVAVNAEIVEHVRGPKIRGMHYKNKTGYKRRWGHRQALTVLKITGIK</sequence>
<feature type="chain" id="PRO_1000166716" description="Large ribosomal subunit protein bL21">
    <location>
        <begin position="1"/>
        <end position="100"/>
    </location>
</feature>
<name>RL21_CORU7</name>
<accession>B1VGM1</accession>
<keyword id="KW-1185">Reference proteome</keyword>
<keyword id="KW-0687">Ribonucleoprotein</keyword>
<keyword id="KW-0689">Ribosomal protein</keyword>
<keyword id="KW-0694">RNA-binding</keyword>
<keyword id="KW-0699">rRNA-binding</keyword>
<comment type="function">
    <text evidence="1">This protein binds to 23S rRNA in the presence of protein L20.</text>
</comment>
<comment type="subunit">
    <text evidence="1">Part of the 50S ribosomal subunit. Contacts protein L20.</text>
</comment>
<comment type="similarity">
    <text evidence="1">Belongs to the bacterial ribosomal protein bL21 family.</text>
</comment>
<gene>
    <name evidence="1" type="primary">rplU</name>
    <name type="ordered locus">cu1368</name>
</gene>
<proteinExistence type="inferred from homology"/>
<protein>
    <recommendedName>
        <fullName evidence="1">Large ribosomal subunit protein bL21</fullName>
    </recommendedName>
    <alternativeName>
        <fullName evidence="2">50S ribosomal protein L21</fullName>
    </alternativeName>
</protein>